<protein>
    <recommendedName>
        <fullName evidence="4 5">Streptothricin acetyltransferase</fullName>
        <shortName evidence="5">STAT</shortName>
        <ecNumber evidence="3">2.3.-.-</ecNumber>
    </recommendedName>
</protein>
<evidence type="ECO:0000255" key="1">
    <source>
        <dbReference type="PROSITE-ProRule" id="PRU00532"/>
    </source>
</evidence>
<evidence type="ECO:0000256" key="2">
    <source>
        <dbReference type="SAM" id="MobiDB-lite"/>
    </source>
</evidence>
<evidence type="ECO:0000269" key="3">
    <source>
    </source>
</evidence>
<evidence type="ECO:0000303" key="4">
    <source>
    </source>
</evidence>
<evidence type="ECO:0000303" key="5">
    <source>
    </source>
</evidence>
<evidence type="ECO:0000305" key="6"/>
<evidence type="ECO:0000305" key="7">
    <source>
    </source>
</evidence>
<keyword id="KW-0012">Acyltransferase</keyword>
<keyword id="KW-0046">Antibiotic resistance</keyword>
<keyword id="KW-0808">Transferase</keyword>
<accession>P08457</accession>
<name>STA_STRLA</name>
<reference key="1">
    <citation type="journal article" date="1987" name="J. Bacteriol.">
        <title>Nucleotide sequence of the streptothricin acetyltransferase gene from Streptomyces lavendulae and its expression in heterologous hosts.</title>
        <authorList>
            <person name="Horinouchi S."/>
            <person name="Furuya K."/>
            <person name="Nishiyama M."/>
            <person name="Suzuki H."/>
            <person name="Beppu T."/>
        </authorList>
    </citation>
    <scope>NUCLEOTIDE SEQUENCE [GENOMIC DNA]</scope>
</reference>
<reference key="2">
    <citation type="journal article" date="1986" name="J. Antibiot.">
        <title>Cloning and characterization of the streptothricin-resistance gene which encodes streptothricin acetyltransferase from Streptomyces lavendulae.</title>
        <authorList>
            <person name="Kobayashi T."/>
            <person name="Uozumi T."/>
            <person name="Beppu T."/>
        </authorList>
    </citation>
    <scope>PRELIMINARY FUNCTION</scope>
</reference>
<reference key="3">
    <citation type="journal article" date="1987" name="J. Antibiot.">
        <title>Purification and biochemical characterization of streptothricin acetyltransferase coded by the cloned streptothricin-resistance gene of Streptomyces lavendulae.</title>
        <authorList>
            <person name="Kobayashi T."/>
            <person name="Horinouchi S."/>
            <person name="Uozumi T."/>
            <person name="Beppu T."/>
        </authorList>
    </citation>
    <scope>FUNCTION</scope>
    <scope>CATALYTIC ACTIVITY</scope>
    <scope>BIOPHYSICOCHEMICAL PROPERTIES</scope>
</reference>
<proteinExistence type="evidence at protein level"/>
<feature type="chain" id="PRO_0000068587" description="Streptothricin acetyltransferase">
    <location>
        <begin position="1"/>
        <end position="189"/>
    </location>
</feature>
<feature type="domain" description="N-acetyltransferase" evidence="1">
    <location>
        <begin position="44"/>
        <end position="189"/>
    </location>
</feature>
<feature type="region of interest" description="Disordered" evidence="2">
    <location>
        <begin position="55"/>
        <end position="76"/>
    </location>
</feature>
<feature type="compositionally biased region" description="Acidic residues" evidence="2">
    <location>
        <begin position="63"/>
        <end position="75"/>
    </location>
</feature>
<organism>
    <name type="scientific">Streptomyces lavendulae</name>
    <dbReference type="NCBI Taxonomy" id="1914"/>
    <lineage>
        <taxon>Bacteria</taxon>
        <taxon>Bacillati</taxon>
        <taxon>Actinomycetota</taxon>
        <taxon>Actinomycetes</taxon>
        <taxon>Kitasatosporales</taxon>
        <taxon>Streptomycetaceae</taxon>
        <taxon>Streptomyces</taxon>
    </lineage>
</organism>
<dbReference type="EC" id="2.3.-.-" evidence="3"/>
<dbReference type="EMBL" id="M16183">
    <property type="protein sequence ID" value="AAA88560.1"/>
    <property type="molecule type" value="Genomic_DNA"/>
</dbReference>
<dbReference type="PIR" id="A26872">
    <property type="entry name" value="A26872"/>
</dbReference>
<dbReference type="RefSeq" id="WP_063854936.1">
    <property type="nucleotide sequence ID" value="NG_048077.1"/>
</dbReference>
<dbReference type="SMR" id="P08457"/>
<dbReference type="CARD" id="ARO:3004699">
    <property type="molecule name" value="sta"/>
    <property type="mechanism identifier" value="ARO:0001004"/>
    <property type="mechanism name" value="antibiotic inactivation"/>
</dbReference>
<dbReference type="BioCyc" id="MetaCyc:MONOMER-15932"/>
<dbReference type="GO" id="GO:0016747">
    <property type="term" value="F:acyltransferase activity, transferring groups other than amino-acyl groups"/>
    <property type="evidence" value="ECO:0007669"/>
    <property type="project" value="InterPro"/>
</dbReference>
<dbReference type="GO" id="GO:0046677">
    <property type="term" value="P:response to antibiotic"/>
    <property type="evidence" value="ECO:0007669"/>
    <property type="project" value="UniProtKB-KW"/>
</dbReference>
<dbReference type="CDD" id="cd04301">
    <property type="entry name" value="NAT_SF"/>
    <property type="match status" value="1"/>
</dbReference>
<dbReference type="Gene3D" id="3.40.630.30">
    <property type="match status" value="1"/>
</dbReference>
<dbReference type="InterPro" id="IPR016181">
    <property type="entry name" value="Acyl_CoA_acyltransferase"/>
</dbReference>
<dbReference type="InterPro" id="IPR050832">
    <property type="entry name" value="Bact_Acetyltransf"/>
</dbReference>
<dbReference type="InterPro" id="IPR000182">
    <property type="entry name" value="GNAT_dom"/>
</dbReference>
<dbReference type="NCBIfam" id="NF000487">
    <property type="entry name" value="stat"/>
    <property type="match status" value="1"/>
</dbReference>
<dbReference type="PANTHER" id="PTHR43877:SF2">
    <property type="entry name" value="AMINOALKYLPHOSPHONATE N-ACETYLTRANSFERASE-RELATED"/>
    <property type="match status" value="1"/>
</dbReference>
<dbReference type="PANTHER" id="PTHR43877">
    <property type="entry name" value="AMINOALKYLPHOSPHONATE N-ACETYLTRANSFERASE-RELATED-RELATED"/>
    <property type="match status" value="1"/>
</dbReference>
<dbReference type="Pfam" id="PF00583">
    <property type="entry name" value="Acetyltransf_1"/>
    <property type="match status" value="1"/>
</dbReference>
<dbReference type="SUPFAM" id="SSF55729">
    <property type="entry name" value="Acyl-CoA N-acyltransferases (Nat)"/>
    <property type="match status" value="1"/>
</dbReference>
<dbReference type="PROSITE" id="PS51186">
    <property type="entry name" value="GNAT"/>
    <property type="match status" value="1"/>
</dbReference>
<sequence length="189" mass="20032">MTTTHGSTYEFRSARPGDAEAIEGLDGSFTTSTVFEVDVTGDGFALREVPADPPLVKVFPDDGGSDGEDGAEGEDADSRTFVAVGADGDLAGFAAVSYSAWNQRLTIEDIEVAPGHRGKGIGRVLMRHAADFARERGAGHLWLEVTNVNAPAIHAYRRMGFAFCGLDSALYQGTASEGEHALYMSMPCP</sequence>
<comment type="function">
    <text evidence="3 7">Involved in resistance to streptothricin, a broad-spectrum antibiotic produced by streptomycetes. Detoxifies streptothricin via acetylation of the beta amino group of the first beta-lysyl moiety of streptothricin.</text>
</comment>
<comment type="catalytic activity">
    <reaction evidence="3">
        <text>streptothricin F + acetyl-CoA = N(beta)-acetylstreptothricin F + CoA + H(+)</text>
        <dbReference type="Rhea" id="RHEA:57000"/>
        <dbReference type="ChEBI" id="CHEBI:15378"/>
        <dbReference type="ChEBI" id="CHEBI:57287"/>
        <dbReference type="ChEBI" id="CHEBI:57288"/>
        <dbReference type="ChEBI" id="CHEBI:60822"/>
        <dbReference type="ChEBI" id="CHEBI:141394"/>
    </reaction>
</comment>
<comment type="biophysicochemical properties">
    <kinetics>
        <KM evidence="3">69 uM for S-acetyl CoA</KM>
        <KM evidence="3">2.3 uM for streptothricin F</KM>
    </kinetics>
    <phDependence>
        <text evidence="3">Optimum pH is 7.8.</text>
    </phDependence>
    <temperatureDependence>
        <text evidence="3">Stable at 35 degrees Celsius. Rapid inactivation occurs at 50 degrees Celsius.</text>
    </temperatureDependence>
</comment>
<comment type="similarity">
    <text evidence="6">Belongs to the acetyltransferase family. GNAT subfamily.</text>
</comment>
<gene>
    <name evidence="5" type="primary">sta</name>
</gene>